<accession>C5D9C5</accession>
<evidence type="ECO:0000255" key="1">
    <source>
        <dbReference type="HAMAP-Rule" id="MF_01077"/>
    </source>
</evidence>
<organism>
    <name type="scientific">Geobacillus sp. (strain WCH70)</name>
    <dbReference type="NCBI Taxonomy" id="471223"/>
    <lineage>
        <taxon>Bacteria</taxon>
        <taxon>Bacillati</taxon>
        <taxon>Bacillota</taxon>
        <taxon>Bacilli</taxon>
        <taxon>Bacillales</taxon>
        <taxon>Anoxybacillaceae</taxon>
        <taxon>Geobacillus</taxon>
    </lineage>
</organism>
<proteinExistence type="inferred from homology"/>
<reference key="1">
    <citation type="submission" date="2009-06" db="EMBL/GenBank/DDBJ databases">
        <title>Complete sequence of chromosome of Geopacillus sp. WCH70.</title>
        <authorList>
            <consortium name="US DOE Joint Genome Institute"/>
            <person name="Lucas S."/>
            <person name="Copeland A."/>
            <person name="Lapidus A."/>
            <person name="Glavina del Rio T."/>
            <person name="Dalin E."/>
            <person name="Tice H."/>
            <person name="Bruce D."/>
            <person name="Goodwin L."/>
            <person name="Pitluck S."/>
            <person name="Chertkov O."/>
            <person name="Brettin T."/>
            <person name="Detter J.C."/>
            <person name="Han C."/>
            <person name="Larimer F."/>
            <person name="Land M."/>
            <person name="Hauser L."/>
            <person name="Kyrpides N."/>
            <person name="Mikhailova N."/>
            <person name="Brumm P."/>
            <person name="Mead D.A."/>
            <person name="Richardson P."/>
        </authorList>
    </citation>
    <scope>NUCLEOTIDE SEQUENCE [LARGE SCALE GENOMIC DNA]</scope>
    <source>
        <strain>WCH70</strain>
    </source>
</reference>
<dbReference type="EMBL" id="CP001638">
    <property type="protein sequence ID" value="ACS24011.1"/>
    <property type="molecule type" value="Genomic_DNA"/>
</dbReference>
<dbReference type="SMR" id="C5D9C5"/>
<dbReference type="STRING" id="471223.GWCH70_1151"/>
<dbReference type="KEGG" id="gwc:GWCH70_1151"/>
<dbReference type="eggNOG" id="COG0779">
    <property type="taxonomic scope" value="Bacteria"/>
</dbReference>
<dbReference type="HOGENOM" id="CLU_070525_2_0_9"/>
<dbReference type="OrthoDB" id="9805006at2"/>
<dbReference type="GO" id="GO:0005829">
    <property type="term" value="C:cytosol"/>
    <property type="evidence" value="ECO:0007669"/>
    <property type="project" value="TreeGrafter"/>
</dbReference>
<dbReference type="GO" id="GO:0000028">
    <property type="term" value="P:ribosomal small subunit assembly"/>
    <property type="evidence" value="ECO:0007669"/>
    <property type="project" value="TreeGrafter"/>
</dbReference>
<dbReference type="GO" id="GO:0006412">
    <property type="term" value="P:translation"/>
    <property type="evidence" value="ECO:0007669"/>
    <property type="project" value="TreeGrafter"/>
</dbReference>
<dbReference type="CDD" id="cd01734">
    <property type="entry name" value="YlxS_C"/>
    <property type="match status" value="1"/>
</dbReference>
<dbReference type="FunFam" id="3.30.300.70:FF:000001">
    <property type="entry name" value="Ribosome maturation factor RimP"/>
    <property type="match status" value="1"/>
</dbReference>
<dbReference type="Gene3D" id="2.30.30.180">
    <property type="entry name" value="Ribosome maturation factor RimP, C-terminal domain"/>
    <property type="match status" value="1"/>
</dbReference>
<dbReference type="Gene3D" id="3.30.300.70">
    <property type="entry name" value="RimP-like superfamily, N-terminal"/>
    <property type="match status" value="1"/>
</dbReference>
<dbReference type="HAMAP" id="MF_01077">
    <property type="entry name" value="RimP"/>
    <property type="match status" value="1"/>
</dbReference>
<dbReference type="InterPro" id="IPR003728">
    <property type="entry name" value="Ribosome_maturation_RimP"/>
</dbReference>
<dbReference type="InterPro" id="IPR028998">
    <property type="entry name" value="RimP_C"/>
</dbReference>
<dbReference type="InterPro" id="IPR036847">
    <property type="entry name" value="RimP_C_sf"/>
</dbReference>
<dbReference type="InterPro" id="IPR028989">
    <property type="entry name" value="RimP_N"/>
</dbReference>
<dbReference type="InterPro" id="IPR035956">
    <property type="entry name" value="RimP_N_sf"/>
</dbReference>
<dbReference type="NCBIfam" id="NF000928">
    <property type="entry name" value="PRK00092.1-2"/>
    <property type="match status" value="1"/>
</dbReference>
<dbReference type="PANTHER" id="PTHR33867">
    <property type="entry name" value="RIBOSOME MATURATION FACTOR RIMP"/>
    <property type="match status" value="1"/>
</dbReference>
<dbReference type="PANTHER" id="PTHR33867:SF1">
    <property type="entry name" value="RIBOSOME MATURATION FACTOR RIMP"/>
    <property type="match status" value="1"/>
</dbReference>
<dbReference type="Pfam" id="PF17384">
    <property type="entry name" value="DUF150_C"/>
    <property type="match status" value="1"/>
</dbReference>
<dbReference type="Pfam" id="PF02576">
    <property type="entry name" value="RimP_N"/>
    <property type="match status" value="1"/>
</dbReference>
<dbReference type="SUPFAM" id="SSF74942">
    <property type="entry name" value="YhbC-like, C-terminal domain"/>
    <property type="match status" value="1"/>
</dbReference>
<dbReference type="SUPFAM" id="SSF75420">
    <property type="entry name" value="YhbC-like, N-terminal domain"/>
    <property type="match status" value="1"/>
</dbReference>
<gene>
    <name evidence="1" type="primary">rimP</name>
    <name type="ordered locus">GWCH70_1151</name>
</gene>
<keyword id="KW-0963">Cytoplasm</keyword>
<keyword id="KW-0690">Ribosome biogenesis</keyword>
<name>RIMP_GEOSW</name>
<sequence>MSKKVTNIVEELVTPILADMDLELVDIEYVKEGKNWFLRVFIDSDNGVDIEQCGMVSEKLSEKLDEVDPIPHNYFLEVSSPGAERPLKKPKDFTKAIGKNVYIKTYEPIEGEKEFEGELIGFDGTTVSVTVKDKTRKKTIDIPYEKVASARLAVIFF</sequence>
<comment type="function">
    <text evidence="1">Required for maturation of 30S ribosomal subunits.</text>
</comment>
<comment type="subcellular location">
    <subcellularLocation>
        <location evidence="1">Cytoplasm</location>
    </subcellularLocation>
</comment>
<comment type="similarity">
    <text evidence="1">Belongs to the RimP family.</text>
</comment>
<feature type="chain" id="PRO_1000213494" description="Ribosome maturation factor RimP">
    <location>
        <begin position="1"/>
        <end position="157"/>
    </location>
</feature>
<protein>
    <recommendedName>
        <fullName evidence="1">Ribosome maturation factor RimP</fullName>
    </recommendedName>
</protein>